<accession>B4EHJ0</accession>
<evidence type="ECO:0000250" key="1"/>
<evidence type="ECO:0000255" key="2">
    <source>
        <dbReference type="HAMAP-Rule" id="MF_00768"/>
    </source>
</evidence>
<reference key="1">
    <citation type="journal article" date="2009" name="J. Bacteriol.">
        <title>The genome of Burkholderia cenocepacia J2315, an epidemic pathogen of cystic fibrosis patients.</title>
        <authorList>
            <person name="Holden M.T."/>
            <person name="Seth-Smith H.M."/>
            <person name="Crossman L.C."/>
            <person name="Sebaihia M."/>
            <person name="Bentley S.D."/>
            <person name="Cerdeno-Tarraga A.M."/>
            <person name="Thomson N.R."/>
            <person name="Bason N."/>
            <person name="Quail M.A."/>
            <person name="Sharp S."/>
            <person name="Cherevach I."/>
            <person name="Churcher C."/>
            <person name="Goodhead I."/>
            <person name="Hauser H."/>
            <person name="Holroyd N."/>
            <person name="Mungall K."/>
            <person name="Scott P."/>
            <person name="Walker D."/>
            <person name="White B."/>
            <person name="Rose H."/>
            <person name="Iversen P."/>
            <person name="Mil-Homens D."/>
            <person name="Rocha E.P."/>
            <person name="Fialho A.M."/>
            <person name="Baldwin A."/>
            <person name="Dowson C."/>
            <person name="Barrell B.G."/>
            <person name="Govan J.R."/>
            <person name="Vandamme P."/>
            <person name="Hart C.A."/>
            <person name="Mahenthiralingam E."/>
            <person name="Parkhill J."/>
        </authorList>
    </citation>
    <scope>NUCLEOTIDE SEQUENCE [LARGE SCALE GENOMIC DNA]</scope>
    <source>
        <strain>ATCC BAA-245 / DSM 16553 / LMG 16656 / NCTC 13227 / J2315 / CF5610</strain>
    </source>
</reference>
<gene>
    <name evidence="2" type="primary">betI</name>
    <name type="ordered locus">BceJ2315_57770</name>
    <name type="ORF">BCAM2341</name>
</gene>
<keyword id="KW-0238">DNA-binding</keyword>
<keyword id="KW-0678">Repressor</keyword>
<keyword id="KW-0804">Transcription</keyword>
<keyword id="KW-0805">Transcription regulation</keyword>
<proteinExistence type="inferred from homology"/>
<name>BETI_BURCJ</name>
<comment type="function">
    <text evidence="1">Repressor involved in the biosynthesis of the osmoprotectant glycine betaine. It represses transcription of the choline transporter BetT and the genes of BetAB involved in the synthesis of glycine betaine (By similarity).</text>
</comment>
<comment type="pathway">
    <text>Amine and polyamine biosynthesis; betaine biosynthesis via choline pathway [regulation].</text>
</comment>
<organism>
    <name type="scientific">Burkholderia cenocepacia (strain ATCC BAA-245 / DSM 16553 / LMG 16656 / NCTC 13227 / J2315 / CF5610)</name>
    <name type="common">Burkholderia cepacia (strain J2315)</name>
    <dbReference type="NCBI Taxonomy" id="216591"/>
    <lineage>
        <taxon>Bacteria</taxon>
        <taxon>Pseudomonadati</taxon>
        <taxon>Pseudomonadota</taxon>
        <taxon>Betaproteobacteria</taxon>
        <taxon>Burkholderiales</taxon>
        <taxon>Burkholderiaceae</taxon>
        <taxon>Burkholderia</taxon>
        <taxon>Burkholderia cepacia complex</taxon>
    </lineage>
</organism>
<protein>
    <recommendedName>
        <fullName evidence="2">HTH-type transcriptional regulator BetI</fullName>
    </recommendedName>
</protein>
<feature type="chain" id="PRO_1000133654" description="HTH-type transcriptional regulator BetI">
    <location>
        <begin position="1"/>
        <end position="194"/>
    </location>
</feature>
<feature type="domain" description="HTH tetR-type" evidence="2">
    <location>
        <begin position="8"/>
        <end position="68"/>
    </location>
</feature>
<feature type="DNA-binding region" description="H-T-H motif" evidence="2">
    <location>
        <begin position="31"/>
        <end position="50"/>
    </location>
</feature>
<sequence length="194" mass="21403">MPKVGMREIRRAQLIDATLRSIDEAGLPGTTLASVAQRANISTGIVSHYFGDKDGLLEATMRHVLRDLWSATTRRRVAARKDPRSRLRAVVAANFDDTQVSAPVMKTWLAFWSQSMHDPMLKRLQHVNTRRLHSNLCAEFAKALPRTKAREAASGLAALIDGLWLRGALAGGPIDTRAALKLAHDYIDLLLASD</sequence>
<dbReference type="EMBL" id="AM747721">
    <property type="protein sequence ID" value="CAR56200.1"/>
    <property type="molecule type" value="Genomic_DNA"/>
</dbReference>
<dbReference type="RefSeq" id="WP_006482690.1">
    <property type="nucleotide sequence ID" value="NC_011001.1"/>
</dbReference>
<dbReference type="SMR" id="B4EHJ0"/>
<dbReference type="GeneID" id="56562859"/>
<dbReference type="KEGG" id="bcj:BCAM2341"/>
<dbReference type="eggNOG" id="COG1309">
    <property type="taxonomic scope" value="Bacteria"/>
</dbReference>
<dbReference type="HOGENOM" id="CLU_069356_15_4_4"/>
<dbReference type="BioCyc" id="BCEN216591:G1G1V-6421-MONOMER"/>
<dbReference type="UniPathway" id="UPA00529"/>
<dbReference type="Proteomes" id="UP000001035">
    <property type="component" value="Chromosome 2"/>
</dbReference>
<dbReference type="GO" id="GO:0003700">
    <property type="term" value="F:DNA-binding transcription factor activity"/>
    <property type="evidence" value="ECO:0007669"/>
    <property type="project" value="UniProtKB-UniRule"/>
</dbReference>
<dbReference type="GO" id="GO:0000976">
    <property type="term" value="F:transcription cis-regulatory region binding"/>
    <property type="evidence" value="ECO:0007669"/>
    <property type="project" value="TreeGrafter"/>
</dbReference>
<dbReference type="GO" id="GO:0019285">
    <property type="term" value="P:glycine betaine biosynthetic process from choline"/>
    <property type="evidence" value="ECO:0007669"/>
    <property type="project" value="UniProtKB-UniRule"/>
</dbReference>
<dbReference type="GO" id="GO:0045892">
    <property type="term" value="P:negative regulation of DNA-templated transcription"/>
    <property type="evidence" value="ECO:0007669"/>
    <property type="project" value="UniProtKB-UniRule"/>
</dbReference>
<dbReference type="Gene3D" id="1.10.357.10">
    <property type="entry name" value="Tetracycline Repressor, domain 2"/>
    <property type="match status" value="1"/>
</dbReference>
<dbReference type="HAMAP" id="MF_00768">
    <property type="entry name" value="HTH_type_BetI"/>
    <property type="match status" value="1"/>
</dbReference>
<dbReference type="InterPro" id="IPR039538">
    <property type="entry name" value="BetI_C"/>
</dbReference>
<dbReference type="InterPro" id="IPR023772">
    <property type="entry name" value="DNA-bd_HTH_TetR-type_CS"/>
</dbReference>
<dbReference type="InterPro" id="IPR009057">
    <property type="entry name" value="Homeodomain-like_sf"/>
</dbReference>
<dbReference type="InterPro" id="IPR050109">
    <property type="entry name" value="HTH-type_TetR-like_transc_reg"/>
</dbReference>
<dbReference type="InterPro" id="IPR001647">
    <property type="entry name" value="HTH_TetR"/>
</dbReference>
<dbReference type="InterPro" id="IPR036271">
    <property type="entry name" value="Tet_transcr_reg_TetR-rel_C_sf"/>
</dbReference>
<dbReference type="InterPro" id="IPR017757">
    <property type="entry name" value="Tscrpt_rep_BetI"/>
</dbReference>
<dbReference type="NCBIfam" id="TIGR03384">
    <property type="entry name" value="betaine_BetI"/>
    <property type="match status" value="1"/>
</dbReference>
<dbReference type="NCBIfam" id="NF001978">
    <property type="entry name" value="PRK00767.1"/>
    <property type="match status" value="1"/>
</dbReference>
<dbReference type="PANTHER" id="PTHR30055:SF234">
    <property type="entry name" value="HTH-TYPE TRANSCRIPTIONAL REGULATOR BETI"/>
    <property type="match status" value="1"/>
</dbReference>
<dbReference type="PANTHER" id="PTHR30055">
    <property type="entry name" value="HTH-TYPE TRANSCRIPTIONAL REGULATOR RUTR"/>
    <property type="match status" value="1"/>
</dbReference>
<dbReference type="Pfam" id="PF13977">
    <property type="entry name" value="TetR_C_6"/>
    <property type="match status" value="1"/>
</dbReference>
<dbReference type="Pfam" id="PF00440">
    <property type="entry name" value="TetR_N"/>
    <property type="match status" value="1"/>
</dbReference>
<dbReference type="SUPFAM" id="SSF46689">
    <property type="entry name" value="Homeodomain-like"/>
    <property type="match status" value="1"/>
</dbReference>
<dbReference type="SUPFAM" id="SSF48498">
    <property type="entry name" value="Tetracyclin repressor-like, C-terminal domain"/>
    <property type="match status" value="1"/>
</dbReference>
<dbReference type="PROSITE" id="PS01081">
    <property type="entry name" value="HTH_TETR_1"/>
    <property type="match status" value="1"/>
</dbReference>
<dbReference type="PROSITE" id="PS50977">
    <property type="entry name" value="HTH_TETR_2"/>
    <property type="match status" value="1"/>
</dbReference>